<keyword id="KW-0488">Methylation</keyword>
<keyword id="KW-0687">Ribonucleoprotein</keyword>
<keyword id="KW-0689">Ribosomal protein</keyword>
<keyword id="KW-0694">RNA-binding</keyword>
<keyword id="KW-0699">rRNA-binding</keyword>
<keyword id="KW-0820">tRNA-binding</keyword>
<reference key="1">
    <citation type="journal article" date="2007" name="J. Bacteriol.">
        <title>Complete genome sequence of Haemophilus somnus (Histophilus somni) strain 129Pt and comparison to Haemophilus ducreyi 35000HP and Haemophilus influenzae Rd.</title>
        <authorList>
            <person name="Challacombe J.F."/>
            <person name="Duncan A.J."/>
            <person name="Brettin T.S."/>
            <person name="Bruce D."/>
            <person name="Chertkov O."/>
            <person name="Detter J.C."/>
            <person name="Han C.S."/>
            <person name="Misra M."/>
            <person name="Richardson P."/>
            <person name="Tapia R."/>
            <person name="Thayer N."/>
            <person name="Xie G."/>
            <person name="Inzana T.J."/>
        </authorList>
    </citation>
    <scope>NUCLEOTIDE SEQUENCE [LARGE SCALE GENOMIC DNA]</scope>
    <source>
        <strain>129Pt</strain>
    </source>
</reference>
<feature type="chain" id="PRO_0000263561" description="Small ribosomal subunit protein uS12">
    <location>
        <begin position="1"/>
        <end position="124"/>
    </location>
</feature>
<feature type="modified residue" description="3-methylthioaspartic acid" evidence="1">
    <location>
        <position position="89"/>
    </location>
</feature>
<dbReference type="EMBL" id="CP000436">
    <property type="protein sequence ID" value="ABI25915.1"/>
    <property type="molecule type" value="Genomic_DNA"/>
</dbReference>
<dbReference type="SMR" id="Q0I535"/>
<dbReference type="KEGG" id="hso:HS_1647"/>
<dbReference type="eggNOG" id="COG0048">
    <property type="taxonomic scope" value="Bacteria"/>
</dbReference>
<dbReference type="HOGENOM" id="CLU_104295_1_2_6"/>
<dbReference type="GO" id="GO:0015935">
    <property type="term" value="C:small ribosomal subunit"/>
    <property type="evidence" value="ECO:0007669"/>
    <property type="project" value="InterPro"/>
</dbReference>
<dbReference type="GO" id="GO:0019843">
    <property type="term" value="F:rRNA binding"/>
    <property type="evidence" value="ECO:0007669"/>
    <property type="project" value="UniProtKB-UniRule"/>
</dbReference>
<dbReference type="GO" id="GO:0003735">
    <property type="term" value="F:structural constituent of ribosome"/>
    <property type="evidence" value="ECO:0007669"/>
    <property type="project" value="InterPro"/>
</dbReference>
<dbReference type="GO" id="GO:0000049">
    <property type="term" value="F:tRNA binding"/>
    <property type="evidence" value="ECO:0007669"/>
    <property type="project" value="UniProtKB-UniRule"/>
</dbReference>
<dbReference type="GO" id="GO:0006412">
    <property type="term" value="P:translation"/>
    <property type="evidence" value="ECO:0007669"/>
    <property type="project" value="UniProtKB-UniRule"/>
</dbReference>
<dbReference type="CDD" id="cd03368">
    <property type="entry name" value="Ribosomal_S12"/>
    <property type="match status" value="1"/>
</dbReference>
<dbReference type="FunFam" id="2.40.50.140:FF:000001">
    <property type="entry name" value="30S ribosomal protein S12"/>
    <property type="match status" value="1"/>
</dbReference>
<dbReference type="Gene3D" id="2.40.50.140">
    <property type="entry name" value="Nucleic acid-binding proteins"/>
    <property type="match status" value="1"/>
</dbReference>
<dbReference type="HAMAP" id="MF_00403_B">
    <property type="entry name" value="Ribosomal_uS12_B"/>
    <property type="match status" value="1"/>
</dbReference>
<dbReference type="InterPro" id="IPR012340">
    <property type="entry name" value="NA-bd_OB-fold"/>
</dbReference>
<dbReference type="InterPro" id="IPR006032">
    <property type="entry name" value="Ribosomal_uS12"/>
</dbReference>
<dbReference type="InterPro" id="IPR005679">
    <property type="entry name" value="Ribosomal_uS12_bac"/>
</dbReference>
<dbReference type="NCBIfam" id="TIGR00981">
    <property type="entry name" value="rpsL_bact"/>
    <property type="match status" value="1"/>
</dbReference>
<dbReference type="PANTHER" id="PTHR11652">
    <property type="entry name" value="30S RIBOSOMAL PROTEIN S12 FAMILY MEMBER"/>
    <property type="match status" value="1"/>
</dbReference>
<dbReference type="Pfam" id="PF00164">
    <property type="entry name" value="Ribosom_S12_S23"/>
    <property type="match status" value="1"/>
</dbReference>
<dbReference type="PIRSF" id="PIRSF002133">
    <property type="entry name" value="Ribosomal_S12/S23"/>
    <property type="match status" value="1"/>
</dbReference>
<dbReference type="PRINTS" id="PR01034">
    <property type="entry name" value="RIBOSOMALS12"/>
</dbReference>
<dbReference type="SUPFAM" id="SSF50249">
    <property type="entry name" value="Nucleic acid-binding proteins"/>
    <property type="match status" value="1"/>
</dbReference>
<dbReference type="PROSITE" id="PS00055">
    <property type="entry name" value="RIBOSOMAL_S12"/>
    <property type="match status" value="1"/>
</dbReference>
<proteinExistence type="inferred from homology"/>
<gene>
    <name evidence="2" type="primary">rpsL</name>
    <name type="ordered locus">HS_1647</name>
</gene>
<protein>
    <recommendedName>
        <fullName evidence="2">Small ribosomal subunit protein uS12</fullName>
    </recommendedName>
    <alternativeName>
        <fullName evidence="3">30S ribosomal protein S12</fullName>
    </alternativeName>
</protein>
<comment type="function">
    <text evidence="2">With S4 and S5 plays an important role in translational accuracy.</text>
</comment>
<comment type="function">
    <text evidence="2">Interacts with and stabilizes bases of the 16S rRNA that are involved in tRNA selection in the A site and with the mRNA backbone. Located at the interface of the 30S and 50S subunits, it traverses the body of the 30S subunit contacting proteins on the other side and probably holding the rRNA structure together. The combined cluster of proteins S8, S12 and S17 appears to hold together the shoulder and platform of the 30S subunit.</text>
</comment>
<comment type="subunit">
    <text evidence="2">Part of the 30S ribosomal subunit. Contacts proteins S8 and S17. May interact with IF1 in the 30S initiation complex.</text>
</comment>
<comment type="similarity">
    <text evidence="2">Belongs to the universal ribosomal protein uS12 family.</text>
</comment>
<accession>Q0I535</accession>
<organism>
    <name type="scientific">Histophilus somni (strain 129Pt)</name>
    <name type="common">Haemophilus somnus</name>
    <dbReference type="NCBI Taxonomy" id="205914"/>
    <lineage>
        <taxon>Bacteria</taxon>
        <taxon>Pseudomonadati</taxon>
        <taxon>Pseudomonadota</taxon>
        <taxon>Gammaproteobacteria</taxon>
        <taxon>Pasteurellales</taxon>
        <taxon>Pasteurellaceae</taxon>
        <taxon>Histophilus</taxon>
    </lineage>
</organism>
<evidence type="ECO:0000250" key="1"/>
<evidence type="ECO:0000255" key="2">
    <source>
        <dbReference type="HAMAP-Rule" id="MF_00403"/>
    </source>
</evidence>
<evidence type="ECO:0000305" key="3"/>
<name>RS12_HISS1</name>
<sequence>MATINQLVRKPRVKKVVKSNVPALESCPQKRGVCTRVYTTTPKKPNSALRKVCRIRLTNGFEVTSYIGGEGHNLQEHSVVLIRGGRVKDLPGVRYHTVRGALDCAGVKDRKQSRSKYGVKRPKA</sequence>